<keyword id="KW-0025">Alternative splicing</keyword>
<keyword id="KW-0040">ANK repeat</keyword>
<keyword id="KW-0963">Cytoplasm</keyword>
<keyword id="KW-0227">DNA damage</keyword>
<keyword id="KW-0234">DNA repair</keyword>
<keyword id="KW-0255">Endonuclease</keyword>
<keyword id="KW-0378">Hydrolase</keyword>
<keyword id="KW-0540">Nuclease</keyword>
<keyword id="KW-0539">Nucleus</keyword>
<keyword id="KW-1185">Reference proteome</keyword>
<keyword id="KW-0677">Repeat</keyword>
<sequence>MADTACLALRLLAALREEEARAVEELLRLGADPNLVLDDGAAAVHLAARASHPRALHCLRMLLRWGADPNARSAEGLTPVHVAAAWGCCGALELLLSRGGDPTLRDQDGLRPLDWALQQRHHNCARVLQELDTPTQPDETREPTETFHVAQGSFETETCQGPALAESSGVSQDSELHVHRAELEVEAVEVAVHPQSSEATENSDYSSDASFVTAVEDSLQPGRPGGALELVAGLWVTRGAVSAGKGAPNCQPQVLTLTARDTDKPVLPGDGDLGALHPHSSVPPMSDLQLLQALRALGYSPGPVTPFTRGHYLRRLQEAQASRADVGHSQELAEALRTGTIPDCQVDEEALAQCFQRLDPLKKWREGITKSSFTYLLLDPRLTKDLPARASSLTLAECLQCFVRAIFYVGKGTRARPDAHLWEAFGYHDQPRKQVCPKVRRILDIWASGRGIISLHCFQHVVAMEAYTREACLLDALGLQTLTNQKQGHYYGVVAHWPPSRRRRLGVHLLQRALLVFLAEGERELRPQDIQARG</sequence>
<accession>A8VU90</accession>
<accession>A6H5W1</accession>
<accession>G5E8T1</accession>
<accession>Q8C4V5</accession>
<accession>Q8K2N6</accession>
<gene>
    <name evidence="12" type="primary">Ankle1</name>
    <name evidence="12" type="synonym">Ankrd41</name>
    <name evidence="8" type="synonym">Lem3</name>
</gene>
<proteinExistence type="evidence at transcript level"/>
<name>ANKL1_MOUSE</name>
<organism evidence="13">
    <name type="scientific">Mus musculus</name>
    <name type="common">Mouse</name>
    <dbReference type="NCBI Taxonomy" id="10090"/>
    <lineage>
        <taxon>Eukaryota</taxon>
        <taxon>Metazoa</taxon>
        <taxon>Chordata</taxon>
        <taxon>Craniata</taxon>
        <taxon>Vertebrata</taxon>
        <taxon>Euteleostomi</taxon>
        <taxon>Mammalia</taxon>
        <taxon>Eutheria</taxon>
        <taxon>Euarchontoglires</taxon>
        <taxon>Glires</taxon>
        <taxon>Rodentia</taxon>
        <taxon>Myomorpha</taxon>
        <taxon>Muroidea</taxon>
        <taxon>Muridae</taxon>
        <taxon>Murinae</taxon>
        <taxon>Mus</taxon>
        <taxon>Mus</taxon>
    </lineage>
</organism>
<reference evidence="8" key="1">
    <citation type="submission" date="2007-10" db="EMBL/GenBank/DDBJ databases">
        <title>LEM3 is a novel LEM-domain containing protein.</title>
        <authorList>
            <person name="Brachner A."/>
            <person name="Foisner R."/>
            <person name="Gotzmann J."/>
        </authorList>
    </citation>
    <scope>NUCLEOTIDE SEQUENCE [MRNA] (ISOFORM 1)</scope>
    <source>
        <strain evidence="8">C57BL/6J</strain>
    </source>
</reference>
<reference evidence="9" key="2">
    <citation type="journal article" date="2005" name="Science">
        <title>The transcriptional landscape of the mammalian genome.</title>
        <authorList>
            <person name="Carninci P."/>
            <person name="Kasukawa T."/>
            <person name="Katayama S."/>
            <person name="Gough J."/>
            <person name="Frith M.C."/>
            <person name="Maeda N."/>
            <person name="Oyama R."/>
            <person name="Ravasi T."/>
            <person name="Lenhard B."/>
            <person name="Wells C."/>
            <person name="Kodzius R."/>
            <person name="Shimokawa K."/>
            <person name="Bajic V.B."/>
            <person name="Brenner S.E."/>
            <person name="Batalov S."/>
            <person name="Forrest A.R."/>
            <person name="Zavolan M."/>
            <person name="Davis M.J."/>
            <person name="Wilming L.G."/>
            <person name="Aidinis V."/>
            <person name="Allen J.E."/>
            <person name="Ambesi-Impiombato A."/>
            <person name="Apweiler R."/>
            <person name="Aturaliya R.N."/>
            <person name="Bailey T.L."/>
            <person name="Bansal M."/>
            <person name="Baxter L."/>
            <person name="Beisel K.W."/>
            <person name="Bersano T."/>
            <person name="Bono H."/>
            <person name="Chalk A.M."/>
            <person name="Chiu K.P."/>
            <person name="Choudhary V."/>
            <person name="Christoffels A."/>
            <person name="Clutterbuck D.R."/>
            <person name="Crowe M.L."/>
            <person name="Dalla E."/>
            <person name="Dalrymple B.P."/>
            <person name="de Bono B."/>
            <person name="Della Gatta G."/>
            <person name="di Bernardo D."/>
            <person name="Down T."/>
            <person name="Engstrom P."/>
            <person name="Fagiolini M."/>
            <person name="Faulkner G."/>
            <person name="Fletcher C.F."/>
            <person name="Fukushima T."/>
            <person name="Furuno M."/>
            <person name="Futaki S."/>
            <person name="Gariboldi M."/>
            <person name="Georgii-Hemming P."/>
            <person name="Gingeras T.R."/>
            <person name="Gojobori T."/>
            <person name="Green R.E."/>
            <person name="Gustincich S."/>
            <person name="Harbers M."/>
            <person name="Hayashi Y."/>
            <person name="Hensch T.K."/>
            <person name="Hirokawa N."/>
            <person name="Hill D."/>
            <person name="Huminiecki L."/>
            <person name="Iacono M."/>
            <person name="Ikeo K."/>
            <person name="Iwama A."/>
            <person name="Ishikawa T."/>
            <person name="Jakt M."/>
            <person name="Kanapin A."/>
            <person name="Katoh M."/>
            <person name="Kawasawa Y."/>
            <person name="Kelso J."/>
            <person name="Kitamura H."/>
            <person name="Kitano H."/>
            <person name="Kollias G."/>
            <person name="Krishnan S.P."/>
            <person name="Kruger A."/>
            <person name="Kummerfeld S.K."/>
            <person name="Kurochkin I.V."/>
            <person name="Lareau L.F."/>
            <person name="Lazarevic D."/>
            <person name="Lipovich L."/>
            <person name="Liu J."/>
            <person name="Liuni S."/>
            <person name="McWilliam S."/>
            <person name="Madan Babu M."/>
            <person name="Madera M."/>
            <person name="Marchionni L."/>
            <person name="Matsuda H."/>
            <person name="Matsuzawa S."/>
            <person name="Miki H."/>
            <person name="Mignone F."/>
            <person name="Miyake S."/>
            <person name="Morris K."/>
            <person name="Mottagui-Tabar S."/>
            <person name="Mulder N."/>
            <person name="Nakano N."/>
            <person name="Nakauchi H."/>
            <person name="Ng P."/>
            <person name="Nilsson R."/>
            <person name="Nishiguchi S."/>
            <person name="Nishikawa S."/>
            <person name="Nori F."/>
            <person name="Ohara O."/>
            <person name="Okazaki Y."/>
            <person name="Orlando V."/>
            <person name="Pang K.C."/>
            <person name="Pavan W.J."/>
            <person name="Pavesi G."/>
            <person name="Pesole G."/>
            <person name="Petrovsky N."/>
            <person name="Piazza S."/>
            <person name="Reed J."/>
            <person name="Reid J.F."/>
            <person name="Ring B.Z."/>
            <person name="Ringwald M."/>
            <person name="Rost B."/>
            <person name="Ruan Y."/>
            <person name="Salzberg S.L."/>
            <person name="Sandelin A."/>
            <person name="Schneider C."/>
            <person name="Schoenbach C."/>
            <person name="Sekiguchi K."/>
            <person name="Semple C.A."/>
            <person name="Seno S."/>
            <person name="Sessa L."/>
            <person name="Sheng Y."/>
            <person name="Shibata Y."/>
            <person name="Shimada H."/>
            <person name="Shimada K."/>
            <person name="Silva D."/>
            <person name="Sinclair B."/>
            <person name="Sperling S."/>
            <person name="Stupka E."/>
            <person name="Sugiura K."/>
            <person name="Sultana R."/>
            <person name="Takenaka Y."/>
            <person name="Taki K."/>
            <person name="Tammoja K."/>
            <person name="Tan S.L."/>
            <person name="Tang S."/>
            <person name="Taylor M.S."/>
            <person name="Tegner J."/>
            <person name="Teichmann S.A."/>
            <person name="Ueda H.R."/>
            <person name="van Nimwegen E."/>
            <person name="Verardo R."/>
            <person name="Wei C.L."/>
            <person name="Yagi K."/>
            <person name="Yamanishi H."/>
            <person name="Zabarovsky E."/>
            <person name="Zhu S."/>
            <person name="Zimmer A."/>
            <person name="Hide W."/>
            <person name="Bult C."/>
            <person name="Grimmond S.M."/>
            <person name="Teasdale R.D."/>
            <person name="Liu E.T."/>
            <person name="Brusic V."/>
            <person name="Quackenbush J."/>
            <person name="Wahlestedt C."/>
            <person name="Mattick J.S."/>
            <person name="Hume D.A."/>
            <person name="Kai C."/>
            <person name="Sasaki D."/>
            <person name="Tomaru Y."/>
            <person name="Fukuda S."/>
            <person name="Kanamori-Katayama M."/>
            <person name="Suzuki M."/>
            <person name="Aoki J."/>
            <person name="Arakawa T."/>
            <person name="Iida J."/>
            <person name="Imamura K."/>
            <person name="Itoh M."/>
            <person name="Kato T."/>
            <person name="Kawaji H."/>
            <person name="Kawagashira N."/>
            <person name="Kawashima T."/>
            <person name="Kojima M."/>
            <person name="Kondo S."/>
            <person name="Konno H."/>
            <person name="Nakano K."/>
            <person name="Ninomiya N."/>
            <person name="Nishio T."/>
            <person name="Okada M."/>
            <person name="Plessy C."/>
            <person name="Shibata K."/>
            <person name="Shiraki T."/>
            <person name="Suzuki S."/>
            <person name="Tagami M."/>
            <person name="Waki K."/>
            <person name="Watahiki A."/>
            <person name="Okamura-Oho Y."/>
            <person name="Suzuki H."/>
            <person name="Kawai J."/>
            <person name="Hayashizaki Y."/>
        </authorList>
    </citation>
    <scope>NUCLEOTIDE SEQUENCE [LARGE SCALE MRNA] (ISOFORM 1)</scope>
</reference>
<reference evidence="13" key="3">
    <citation type="journal article" date="2009" name="PLoS Biol.">
        <title>Lineage-specific biology revealed by a finished genome assembly of the mouse.</title>
        <authorList>
            <person name="Church D.M."/>
            <person name="Goodstadt L."/>
            <person name="Hillier L.W."/>
            <person name="Zody M.C."/>
            <person name="Goldstein S."/>
            <person name="She X."/>
            <person name="Bult C.J."/>
            <person name="Agarwala R."/>
            <person name="Cherry J.L."/>
            <person name="DiCuccio M."/>
            <person name="Hlavina W."/>
            <person name="Kapustin Y."/>
            <person name="Meric P."/>
            <person name="Maglott D."/>
            <person name="Birtle Z."/>
            <person name="Marques A.C."/>
            <person name="Graves T."/>
            <person name="Zhou S."/>
            <person name="Teague B."/>
            <person name="Potamousis K."/>
            <person name="Churas C."/>
            <person name="Place M."/>
            <person name="Herschleb J."/>
            <person name="Runnheim R."/>
            <person name="Forrest D."/>
            <person name="Amos-Landgraf J."/>
            <person name="Schwartz D.C."/>
            <person name="Cheng Z."/>
            <person name="Lindblad-Toh K."/>
            <person name="Eichler E.E."/>
            <person name="Ponting C.P."/>
        </authorList>
    </citation>
    <scope>NUCLEOTIDE SEQUENCE [LARGE SCALE GENOMIC DNA]</scope>
    <source>
        <strain evidence="13">C57BL/6J</strain>
    </source>
</reference>
<reference evidence="10" key="4">
    <citation type="submission" date="2005-07" db="EMBL/GenBank/DDBJ databases">
        <authorList>
            <person name="Mural R.J."/>
            <person name="Adams M.D."/>
            <person name="Myers E.W."/>
            <person name="Smith H.O."/>
            <person name="Venter J.C."/>
        </authorList>
    </citation>
    <scope>NUCLEOTIDE SEQUENCE [LARGE SCALE GENOMIC DNA]</scope>
</reference>
<reference evidence="7" key="5">
    <citation type="journal article" date="2004" name="Genome Res.">
        <title>The status, quality, and expansion of the NIH full-length cDNA project: the Mammalian Gene Collection (MGC).</title>
        <authorList>
            <consortium name="The MGC Project Team"/>
        </authorList>
    </citation>
    <scope>NUCLEOTIDE SEQUENCE [LARGE SCALE MRNA]</scope>
    <scope>NUCLEOTIDE SEQUENCE [LARGE SCALE MRNA] OF 252-534</scope>
</reference>
<reference evidence="6" key="6">
    <citation type="journal article" date="2016" name="PLoS ONE">
        <title>The GIY-YIG type endonuclease ankyrin repeat and LEM domain-containing protein 1 (ANKLE1) is dispensable for mouse hematopoiesis.</title>
        <authorList>
            <person name="Braun J."/>
            <person name="Meixner A."/>
            <person name="Brachner A."/>
            <person name="Foisner R."/>
        </authorList>
    </citation>
    <scope>TISSUE SPECIFICITY</scope>
    <scope>DISRUPTION PHENOTYPE</scope>
</reference>
<comment type="function">
    <text evidence="1">Endonuclease that probably plays a role in the DNA damage response and DNA repair.</text>
</comment>
<comment type="subunit">
    <text evidence="1">Interacts (via LEM domain) with BANF1; the interaction may favor BANF1 dimerization.</text>
</comment>
<comment type="subcellular location">
    <subcellularLocation>
        <location evidence="1">Cytoplasm</location>
    </subcellularLocation>
    <subcellularLocation>
        <location evidence="1">Nucleus</location>
    </subcellularLocation>
    <text evidence="1">At the steady state, predominantly localizes in the cytoplasm.</text>
</comment>
<comment type="alternative products">
    <event type="alternative splicing"/>
    <isoform>
        <id>A8VU90-1</id>
        <name evidence="10">1</name>
        <sequence type="displayed"/>
    </isoform>
    <isoform>
        <id>A8VU90-2</id>
        <name evidence="11">2</name>
        <sequence type="described" ref="VSP_058615"/>
    </isoform>
</comment>
<comment type="tissue specificity">
    <text evidence="5">Predominantly expressed in bone marrow, spleen, thymus, colon and ovary. Expressed also to a lesser extent in lymph nodes, liver and testis.</text>
</comment>
<comment type="domain">
    <text evidence="1">The LEM domain is required for GIY-YIG domain-mediated DNA cleavage and induction of DNA damage response.</text>
</comment>
<comment type="disruption phenotype">
    <text evidence="5">No visible phenotype. No defect in T cell, B cell and erythrocyte development. Normal percentage of common myeloid precursors (CMP) and common lymphoid precursors (CLP) in the bone marrow.</text>
</comment>
<comment type="sequence caution" evidence="6">
    <conflict type="erroneous initiation">
        <sequence resource="EMBL-CDS" id="AAH30436"/>
    </conflict>
    <text>Extended N-terminus.</text>
</comment>
<comment type="sequence caution" evidence="6">
    <conflict type="frameshift">
        <sequence resource="EMBL-CDS" id="BAC38015"/>
    </conflict>
</comment>
<comment type="sequence caution" evidence="6">
    <conflict type="miscellaneous discrepancy">
        <sequence resource="EMBL-CDS" id="BAC38015"/>
    </conflict>
    <text>Intron retention.</text>
</comment>
<dbReference type="EC" id="3.1.-.-" evidence="1"/>
<dbReference type="EMBL" id="EU184014">
    <property type="protein sequence ID" value="ABW73566.1"/>
    <property type="molecule type" value="mRNA"/>
</dbReference>
<dbReference type="EMBL" id="AK080768">
    <property type="protein sequence ID" value="BAC38015.1"/>
    <property type="status" value="ALT_SEQ"/>
    <property type="molecule type" value="mRNA"/>
</dbReference>
<dbReference type="EMBL" id="AC127416">
    <property type="status" value="NOT_ANNOTATED_CDS"/>
    <property type="molecule type" value="Genomic_DNA"/>
</dbReference>
<dbReference type="EMBL" id="CH466569">
    <property type="protein sequence ID" value="EDL28917.1"/>
    <property type="molecule type" value="Genomic_DNA"/>
</dbReference>
<dbReference type="EMBL" id="CH466569">
    <property type="protein sequence ID" value="EDL28919.1"/>
    <property type="molecule type" value="Genomic_DNA"/>
</dbReference>
<dbReference type="EMBL" id="BC030436">
    <property type="protein sequence ID" value="AAH30436.1"/>
    <property type="status" value="ALT_INIT"/>
    <property type="molecule type" value="mRNA"/>
</dbReference>
<dbReference type="EMBL" id="BC145659">
    <property type="protein sequence ID" value="AAI45660.1"/>
    <property type="molecule type" value="mRNA"/>
</dbReference>
<dbReference type="CCDS" id="CCDS52583.1">
    <molecule id="A8VU90-1"/>
</dbReference>
<dbReference type="CCDS" id="CCDS80893.1">
    <molecule id="A8VU90-2"/>
</dbReference>
<dbReference type="RefSeq" id="NP_001297431.1">
    <molecule id="A8VU90-2"/>
    <property type="nucleotide sequence ID" value="NM_001310502.1"/>
</dbReference>
<dbReference type="RefSeq" id="NP_766344.2">
    <molecule id="A8VU90-1"/>
    <property type="nucleotide sequence ID" value="NM_172756.3"/>
</dbReference>
<dbReference type="SMR" id="A8VU90"/>
<dbReference type="FunCoup" id="A8VU90">
    <property type="interactions" value="1170"/>
</dbReference>
<dbReference type="STRING" id="10090.ENSMUSP00000113162"/>
<dbReference type="iPTMnet" id="A8VU90"/>
<dbReference type="PhosphoSitePlus" id="A8VU90"/>
<dbReference type="PaxDb" id="10090-ENSMUSP00000113162"/>
<dbReference type="ProteomicsDB" id="281982">
    <molecule id="A8VU90-1"/>
</dbReference>
<dbReference type="ProteomicsDB" id="281983">
    <molecule id="A8VU90-2"/>
</dbReference>
<dbReference type="Antibodypedia" id="27599">
    <property type="antibodies" value="39 antibodies from 22 providers"/>
</dbReference>
<dbReference type="DNASU" id="234396"/>
<dbReference type="Ensembl" id="ENSMUST00000119976.8">
    <molecule id="A8VU90-1"/>
    <property type="protein sequence ID" value="ENSMUSP00000113162.2"/>
    <property type="gene ID" value="ENSMUSG00000046295.14"/>
</dbReference>
<dbReference type="Ensembl" id="ENSMUST00000120725.2">
    <molecule id="A8VU90-2"/>
    <property type="protein sequence ID" value="ENSMUSP00000112797.2"/>
    <property type="gene ID" value="ENSMUSG00000046295.14"/>
</dbReference>
<dbReference type="GeneID" id="234396"/>
<dbReference type="KEGG" id="mmu:234396"/>
<dbReference type="UCSC" id="uc009mdc.2">
    <property type="organism name" value="mouse"/>
</dbReference>
<dbReference type="UCSC" id="uc009mdd.2">
    <molecule id="A8VU90-1"/>
    <property type="organism name" value="mouse"/>
</dbReference>
<dbReference type="AGR" id="MGI:1918775"/>
<dbReference type="CTD" id="126549"/>
<dbReference type="MGI" id="MGI:1918775">
    <property type="gene designation" value="Ankle1"/>
</dbReference>
<dbReference type="VEuPathDB" id="HostDB:ENSMUSG00000046295"/>
<dbReference type="eggNOG" id="KOG4177">
    <property type="taxonomic scope" value="Eukaryota"/>
</dbReference>
<dbReference type="GeneTree" id="ENSGT00510000049316"/>
<dbReference type="InParanoid" id="A8VU90"/>
<dbReference type="OMA" id="QGHRDCA"/>
<dbReference type="OrthoDB" id="1601181at2759"/>
<dbReference type="PhylomeDB" id="A8VU90"/>
<dbReference type="TreeFam" id="TF319333"/>
<dbReference type="BioGRID-ORCS" id="234396">
    <property type="hits" value="5 hits in 78 CRISPR screens"/>
</dbReference>
<dbReference type="ChiTaRS" id="Ankle1">
    <property type="organism name" value="mouse"/>
</dbReference>
<dbReference type="PRO" id="PR:A8VU90"/>
<dbReference type="Proteomes" id="UP000000589">
    <property type="component" value="Chromosome 8"/>
</dbReference>
<dbReference type="RNAct" id="A8VU90">
    <property type="molecule type" value="protein"/>
</dbReference>
<dbReference type="Bgee" id="ENSMUSG00000046295">
    <property type="expression patterns" value="Expressed in embryonic post-anal tail and 88 other cell types or tissues"/>
</dbReference>
<dbReference type="GO" id="GO:0005829">
    <property type="term" value="C:cytosol"/>
    <property type="evidence" value="ECO:0007669"/>
    <property type="project" value="Ensembl"/>
</dbReference>
<dbReference type="GO" id="GO:0005654">
    <property type="term" value="C:nucleoplasm"/>
    <property type="evidence" value="ECO:0007669"/>
    <property type="project" value="Ensembl"/>
</dbReference>
<dbReference type="GO" id="GO:0004519">
    <property type="term" value="F:endonuclease activity"/>
    <property type="evidence" value="ECO:0007669"/>
    <property type="project" value="UniProtKB-KW"/>
</dbReference>
<dbReference type="GO" id="GO:0045950">
    <property type="term" value="P:negative regulation of mitotic recombination"/>
    <property type="evidence" value="ECO:0000316"/>
    <property type="project" value="UniProtKB"/>
</dbReference>
<dbReference type="GO" id="GO:0006611">
    <property type="term" value="P:protein export from nucleus"/>
    <property type="evidence" value="ECO:0007669"/>
    <property type="project" value="Ensembl"/>
</dbReference>
<dbReference type="GO" id="GO:1905456">
    <property type="term" value="P:regulation of lymphoid progenitor cell differentiation"/>
    <property type="evidence" value="ECO:0000315"/>
    <property type="project" value="UniProtKB"/>
</dbReference>
<dbReference type="GO" id="GO:1905453">
    <property type="term" value="P:regulation of myeloid progenitor cell differentiation"/>
    <property type="evidence" value="ECO:0000315"/>
    <property type="project" value="UniProtKB"/>
</dbReference>
<dbReference type="CDD" id="cd10454">
    <property type="entry name" value="GIY-YIG_COG3680_Meta"/>
    <property type="match status" value="1"/>
</dbReference>
<dbReference type="FunFam" id="1.25.40.20:FF:000627">
    <property type="entry name" value="Ankyrin repeat and LEM domain containing 1"/>
    <property type="match status" value="1"/>
</dbReference>
<dbReference type="Gene3D" id="1.10.720.40">
    <property type="match status" value="1"/>
</dbReference>
<dbReference type="Gene3D" id="1.25.40.20">
    <property type="entry name" value="Ankyrin repeat-containing domain"/>
    <property type="match status" value="1"/>
</dbReference>
<dbReference type="InterPro" id="IPR034998">
    <property type="entry name" value="ANKLE1"/>
</dbReference>
<dbReference type="InterPro" id="IPR002110">
    <property type="entry name" value="Ankyrin_rpt"/>
</dbReference>
<dbReference type="InterPro" id="IPR036770">
    <property type="entry name" value="Ankyrin_rpt-contain_sf"/>
</dbReference>
<dbReference type="InterPro" id="IPR000305">
    <property type="entry name" value="GIY-YIG_endonuc"/>
</dbReference>
<dbReference type="InterPro" id="IPR011015">
    <property type="entry name" value="LEM/LEM-like_dom_sf"/>
</dbReference>
<dbReference type="InterPro" id="IPR003887">
    <property type="entry name" value="LEM_dom"/>
</dbReference>
<dbReference type="PANTHER" id="PTHR46427">
    <property type="entry name" value="ANKYRIN REPEAT AND LEM DOMAIN-CONTAINING PROTEIN 1"/>
    <property type="match status" value="1"/>
</dbReference>
<dbReference type="PANTHER" id="PTHR46427:SF1">
    <property type="entry name" value="ANKYRIN REPEAT AND LEM DOMAIN-CONTAINING PROTEIN 1"/>
    <property type="match status" value="1"/>
</dbReference>
<dbReference type="Pfam" id="PF12796">
    <property type="entry name" value="Ank_2"/>
    <property type="match status" value="1"/>
</dbReference>
<dbReference type="Pfam" id="PF03020">
    <property type="entry name" value="LEM"/>
    <property type="match status" value="1"/>
</dbReference>
<dbReference type="Pfam" id="PF22945">
    <property type="entry name" value="LEM-3_GIY-YIG"/>
    <property type="match status" value="1"/>
</dbReference>
<dbReference type="SMART" id="SM00248">
    <property type="entry name" value="ANK"/>
    <property type="match status" value="4"/>
</dbReference>
<dbReference type="SUPFAM" id="SSF48403">
    <property type="entry name" value="Ankyrin repeat"/>
    <property type="match status" value="1"/>
</dbReference>
<dbReference type="SUPFAM" id="SSF63451">
    <property type="entry name" value="LEM domain"/>
    <property type="match status" value="1"/>
</dbReference>
<dbReference type="PROSITE" id="PS50297">
    <property type="entry name" value="ANK_REP_REGION"/>
    <property type="match status" value="1"/>
</dbReference>
<dbReference type="PROSITE" id="PS50088">
    <property type="entry name" value="ANK_REPEAT"/>
    <property type="match status" value="2"/>
</dbReference>
<dbReference type="PROSITE" id="PS50164">
    <property type="entry name" value="GIY_YIG"/>
    <property type="match status" value="1"/>
</dbReference>
<dbReference type="PROSITE" id="PS50954">
    <property type="entry name" value="LEM"/>
    <property type="match status" value="1"/>
</dbReference>
<protein>
    <recommendedName>
        <fullName evidence="1">Ankyrin repeat and LEM domain-containing protein 1</fullName>
        <ecNumber evidence="1">3.1.-.-</ecNumber>
    </recommendedName>
    <alternativeName>
        <fullName evidence="1">Ankyrin repeat domain-containing protein 41</fullName>
    </alternativeName>
    <alternativeName>
        <fullName evidence="1">LEM-domain containing protein 3</fullName>
    </alternativeName>
</protein>
<feature type="chain" id="PRO_0000438146" description="Ankyrin repeat and LEM domain-containing protein 1" evidence="6">
    <location>
        <begin position="1"/>
        <end position="534"/>
    </location>
</feature>
<feature type="repeat" description="ANK 1" evidence="2">
    <location>
        <begin position="4"/>
        <end position="35"/>
    </location>
</feature>
<feature type="repeat" description="ANK 2" evidence="2">
    <location>
        <begin position="39"/>
        <end position="71"/>
    </location>
</feature>
<feature type="repeat" description="ANK 3" evidence="2">
    <location>
        <begin position="75"/>
        <end position="104"/>
    </location>
</feature>
<feature type="repeat" description="ANK 4" evidence="2">
    <location>
        <begin position="108"/>
        <end position="137"/>
    </location>
</feature>
<feature type="domain" description="LEM" evidence="3">
    <location>
        <begin position="279"/>
        <end position="323"/>
    </location>
</feature>
<feature type="domain" description="GIY-YIG" evidence="4">
    <location>
        <begin position="370"/>
        <end position="485"/>
    </location>
</feature>
<feature type="short sequence motif" description="Nuclear localization signal" evidence="1">
    <location>
        <begin position="498"/>
        <end position="505"/>
    </location>
</feature>
<feature type="splice variant" id="VSP_058615" description="In isoform 2." evidence="6">
    <location>
        <begin position="145"/>
        <end position="164"/>
    </location>
</feature>
<feature type="sequence conflict" description="In Ref. 5; AAH30436/AAI45660." evidence="6" ref="5">
    <original>F</original>
    <variation>L</variation>
    <location>
        <position position="425"/>
    </location>
</feature>
<feature type="sequence conflict" description="In Ref. 2; BAC38015." evidence="6" ref="2">
    <original>GL</original>
    <variation>VF</variation>
    <location>
        <begin position="478"/>
        <end position="479"/>
    </location>
</feature>
<evidence type="ECO:0000250" key="1">
    <source>
        <dbReference type="UniProtKB" id="Q8NAG6"/>
    </source>
</evidence>
<evidence type="ECO:0000255" key="2"/>
<evidence type="ECO:0000255" key="3">
    <source>
        <dbReference type="PROSITE-ProRule" id="PRU00313"/>
    </source>
</evidence>
<evidence type="ECO:0000255" key="4">
    <source>
        <dbReference type="PROSITE-ProRule" id="PRU00977"/>
    </source>
</evidence>
<evidence type="ECO:0000269" key="5">
    <source>
    </source>
</evidence>
<evidence type="ECO:0000305" key="6"/>
<evidence type="ECO:0000312" key="7">
    <source>
        <dbReference type="EMBL" id="AAH30436.1"/>
    </source>
</evidence>
<evidence type="ECO:0000312" key="8">
    <source>
        <dbReference type="EMBL" id="ABW73566.1"/>
    </source>
</evidence>
<evidence type="ECO:0000312" key="9">
    <source>
        <dbReference type="EMBL" id="BAC38015.1"/>
    </source>
</evidence>
<evidence type="ECO:0000312" key="10">
    <source>
        <dbReference type="EMBL" id="EDL28917.1"/>
    </source>
</evidence>
<evidence type="ECO:0000312" key="11">
    <source>
        <dbReference type="EMBL" id="EDL28919.1"/>
    </source>
</evidence>
<evidence type="ECO:0000312" key="12">
    <source>
        <dbReference type="MGI" id="MGI:1918775"/>
    </source>
</evidence>
<evidence type="ECO:0000312" key="13">
    <source>
        <dbReference type="Proteomes" id="UP000000589"/>
    </source>
</evidence>